<organism>
    <name type="scientific">Bacillus anthracis</name>
    <dbReference type="NCBI Taxonomy" id="1392"/>
    <lineage>
        <taxon>Bacteria</taxon>
        <taxon>Bacillati</taxon>
        <taxon>Bacillota</taxon>
        <taxon>Bacilli</taxon>
        <taxon>Bacillales</taxon>
        <taxon>Bacillaceae</taxon>
        <taxon>Bacillus</taxon>
        <taxon>Bacillus cereus group</taxon>
    </lineage>
</organism>
<comment type="function">
    <text evidence="1">Could be a nuclease involved in processing of the 5'-end of pre-16S rRNA.</text>
</comment>
<comment type="subcellular location">
    <subcellularLocation>
        <location evidence="1">Cytoplasm</location>
    </subcellularLocation>
</comment>
<comment type="similarity">
    <text evidence="1">Belongs to the YqgF nuclease family.</text>
</comment>
<keyword id="KW-0963">Cytoplasm</keyword>
<keyword id="KW-0378">Hydrolase</keyword>
<keyword id="KW-0540">Nuclease</keyword>
<keyword id="KW-1185">Reference proteome</keyword>
<keyword id="KW-0690">Ribosome biogenesis</keyword>
<name>YQGF_BACAN</name>
<accession>Q81LK2</accession>
<accession>Q6HT08</accession>
<accession>Q6KM97</accession>
<reference key="1">
    <citation type="journal article" date="2003" name="Nature">
        <title>The genome sequence of Bacillus anthracis Ames and comparison to closely related bacteria.</title>
        <authorList>
            <person name="Read T.D."/>
            <person name="Peterson S.N."/>
            <person name="Tourasse N.J."/>
            <person name="Baillie L.W."/>
            <person name="Paulsen I.T."/>
            <person name="Nelson K.E."/>
            <person name="Tettelin H."/>
            <person name="Fouts D.E."/>
            <person name="Eisen J.A."/>
            <person name="Gill S.R."/>
            <person name="Holtzapple E.K."/>
            <person name="Okstad O.A."/>
            <person name="Helgason E."/>
            <person name="Rilstone J."/>
            <person name="Wu M."/>
            <person name="Kolonay J.F."/>
            <person name="Beanan M.J."/>
            <person name="Dodson R.J."/>
            <person name="Brinkac L.M."/>
            <person name="Gwinn M.L."/>
            <person name="DeBoy R.T."/>
            <person name="Madpu R."/>
            <person name="Daugherty S.C."/>
            <person name="Durkin A.S."/>
            <person name="Haft D.H."/>
            <person name="Nelson W.C."/>
            <person name="Peterson J.D."/>
            <person name="Pop M."/>
            <person name="Khouri H.M."/>
            <person name="Radune D."/>
            <person name="Benton J.L."/>
            <person name="Mahamoud Y."/>
            <person name="Jiang L."/>
            <person name="Hance I.R."/>
            <person name="Weidman J.F."/>
            <person name="Berry K.J."/>
            <person name="Plaut R.D."/>
            <person name="Wolf A.M."/>
            <person name="Watkins K.L."/>
            <person name="Nierman W.C."/>
            <person name="Hazen A."/>
            <person name="Cline R.T."/>
            <person name="Redmond C."/>
            <person name="Thwaite J.E."/>
            <person name="White O."/>
            <person name="Salzberg S.L."/>
            <person name="Thomason B."/>
            <person name="Friedlander A.M."/>
            <person name="Koehler T.M."/>
            <person name="Hanna P.C."/>
            <person name="Kolstoe A.-B."/>
            <person name="Fraser C.M."/>
        </authorList>
    </citation>
    <scope>NUCLEOTIDE SEQUENCE [LARGE SCALE GENOMIC DNA]</scope>
    <source>
        <strain>Ames / isolate Porton</strain>
    </source>
</reference>
<reference key="2">
    <citation type="journal article" date="2009" name="J. Bacteriol.">
        <title>The complete genome sequence of Bacillus anthracis Ames 'Ancestor'.</title>
        <authorList>
            <person name="Ravel J."/>
            <person name="Jiang L."/>
            <person name="Stanley S.T."/>
            <person name="Wilson M.R."/>
            <person name="Decker R.S."/>
            <person name="Read T.D."/>
            <person name="Worsham P."/>
            <person name="Keim P.S."/>
            <person name="Salzberg S.L."/>
            <person name="Fraser-Liggett C.M."/>
            <person name="Rasko D.A."/>
        </authorList>
    </citation>
    <scope>NUCLEOTIDE SEQUENCE [LARGE SCALE GENOMIC DNA]</scope>
    <source>
        <strain>Ames ancestor</strain>
    </source>
</reference>
<reference key="3">
    <citation type="submission" date="2004-01" db="EMBL/GenBank/DDBJ databases">
        <title>Complete genome sequence of Bacillus anthracis Sterne.</title>
        <authorList>
            <person name="Brettin T.S."/>
            <person name="Bruce D."/>
            <person name="Challacombe J.F."/>
            <person name="Gilna P."/>
            <person name="Han C."/>
            <person name="Hill K."/>
            <person name="Hitchcock P."/>
            <person name="Jackson P."/>
            <person name="Keim P."/>
            <person name="Longmire J."/>
            <person name="Lucas S."/>
            <person name="Okinaka R."/>
            <person name="Richardson P."/>
            <person name="Rubin E."/>
            <person name="Tice H."/>
        </authorList>
    </citation>
    <scope>NUCLEOTIDE SEQUENCE [LARGE SCALE GENOMIC DNA]</scope>
    <source>
        <strain>Sterne</strain>
    </source>
</reference>
<protein>
    <recommendedName>
        <fullName evidence="1">Putative pre-16S rRNA nuclease</fullName>
        <ecNumber evidence="1">3.1.-.-</ecNumber>
    </recommendedName>
</protein>
<sequence>MRILGLDVGTKTVGVAISDEMGWTAQGLETIKINEERGQFGFDRISELVKQYDVDKIVVGLPKNMNGTIGPRGEACQQFAENLRELLQLDVVMWDERLSTMAAERLLISADVSRKKRKQVIDKMAAVVILQGFLDSK</sequence>
<feature type="chain" id="PRO_0000172014" description="Putative pre-16S rRNA nuclease">
    <location>
        <begin position="1"/>
        <end position="137"/>
    </location>
</feature>
<dbReference type="EC" id="3.1.-.-" evidence="1"/>
<dbReference type="EMBL" id="AE016879">
    <property type="protein sequence ID" value="AAP28319.1"/>
    <property type="molecule type" value="Genomic_DNA"/>
</dbReference>
<dbReference type="EMBL" id="AE017334">
    <property type="protein sequence ID" value="AAT33736.1"/>
    <property type="molecule type" value="Genomic_DNA"/>
</dbReference>
<dbReference type="EMBL" id="AE017225">
    <property type="protein sequence ID" value="AAT56581.1"/>
    <property type="molecule type" value="Genomic_DNA"/>
</dbReference>
<dbReference type="RefSeq" id="NP_846833.1">
    <property type="nucleotide sequence ID" value="NC_003997.3"/>
</dbReference>
<dbReference type="RefSeq" id="YP_030530.1">
    <property type="nucleotide sequence ID" value="NC_005945.1"/>
</dbReference>
<dbReference type="SMR" id="Q81LK2"/>
<dbReference type="STRING" id="261594.GBAA_4614"/>
<dbReference type="DNASU" id="1088650"/>
<dbReference type="KEGG" id="ban:BA_4614"/>
<dbReference type="KEGG" id="bar:GBAA_4614"/>
<dbReference type="KEGG" id="bat:BAS4282"/>
<dbReference type="PATRIC" id="fig|198094.11.peg.4581"/>
<dbReference type="eggNOG" id="COG0816">
    <property type="taxonomic scope" value="Bacteria"/>
</dbReference>
<dbReference type="HOGENOM" id="CLU_098240_2_0_9"/>
<dbReference type="OMA" id="PMGWTAQ"/>
<dbReference type="OrthoDB" id="9796140at2"/>
<dbReference type="Proteomes" id="UP000000427">
    <property type="component" value="Chromosome"/>
</dbReference>
<dbReference type="Proteomes" id="UP000000594">
    <property type="component" value="Chromosome"/>
</dbReference>
<dbReference type="GO" id="GO:0005829">
    <property type="term" value="C:cytosol"/>
    <property type="evidence" value="ECO:0007669"/>
    <property type="project" value="TreeGrafter"/>
</dbReference>
<dbReference type="GO" id="GO:0004518">
    <property type="term" value="F:nuclease activity"/>
    <property type="evidence" value="ECO:0007669"/>
    <property type="project" value="UniProtKB-KW"/>
</dbReference>
<dbReference type="GO" id="GO:0000967">
    <property type="term" value="P:rRNA 5'-end processing"/>
    <property type="evidence" value="ECO:0007669"/>
    <property type="project" value="UniProtKB-UniRule"/>
</dbReference>
<dbReference type="CDD" id="cd16964">
    <property type="entry name" value="YqgF"/>
    <property type="match status" value="1"/>
</dbReference>
<dbReference type="FunFam" id="3.30.420.140:FF:000003">
    <property type="entry name" value="Putative pre-16S rRNA nuclease"/>
    <property type="match status" value="1"/>
</dbReference>
<dbReference type="Gene3D" id="3.30.420.140">
    <property type="entry name" value="YqgF/RNase H-like domain"/>
    <property type="match status" value="1"/>
</dbReference>
<dbReference type="HAMAP" id="MF_00651">
    <property type="entry name" value="Nuclease_YqgF"/>
    <property type="match status" value="1"/>
</dbReference>
<dbReference type="InterPro" id="IPR012337">
    <property type="entry name" value="RNaseH-like_sf"/>
</dbReference>
<dbReference type="InterPro" id="IPR005227">
    <property type="entry name" value="YqgF"/>
</dbReference>
<dbReference type="InterPro" id="IPR006641">
    <property type="entry name" value="YqgF/RNaseH-like_dom"/>
</dbReference>
<dbReference type="InterPro" id="IPR037027">
    <property type="entry name" value="YqgF/RNaseH-like_dom_sf"/>
</dbReference>
<dbReference type="NCBIfam" id="TIGR00250">
    <property type="entry name" value="RNAse_H_YqgF"/>
    <property type="match status" value="1"/>
</dbReference>
<dbReference type="PANTHER" id="PTHR33317">
    <property type="entry name" value="POLYNUCLEOTIDYL TRANSFERASE, RIBONUCLEASE H-LIKE SUPERFAMILY PROTEIN"/>
    <property type="match status" value="1"/>
</dbReference>
<dbReference type="PANTHER" id="PTHR33317:SF4">
    <property type="entry name" value="POLYNUCLEOTIDYL TRANSFERASE, RIBONUCLEASE H-LIKE SUPERFAMILY PROTEIN"/>
    <property type="match status" value="1"/>
</dbReference>
<dbReference type="Pfam" id="PF03652">
    <property type="entry name" value="RuvX"/>
    <property type="match status" value="1"/>
</dbReference>
<dbReference type="SMART" id="SM00732">
    <property type="entry name" value="YqgFc"/>
    <property type="match status" value="1"/>
</dbReference>
<dbReference type="SUPFAM" id="SSF53098">
    <property type="entry name" value="Ribonuclease H-like"/>
    <property type="match status" value="1"/>
</dbReference>
<proteinExistence type="inferred from homology"/>
<evidence type="ECO:0000255" key="1">
    <source>
        <dbReference type="HAMAP-Rule" id="MF_00651"/>
    </source>
</evidence>
<gene>
    <name type="ordered locus">BA_4614</name>
    <name type="ordered locus">GBAA_4614</name>
    <name type="ordered locus">BAS4282</name>
</gene>